<accession>P02026</accession>
<protein>
    <recommendedName>
        <fullName>Hemoglobin subunit beta</fullName>
    </recommendedName>
    <alternativeName>
        <fullName>Beta-globin</fullName>
    </alternativeName>
    <alternativeName>
        <fullName>Hemoglobin beta chain</fullName>
    </alternativeName>
</protein>
<dbReference type="PIR" id="A02354">
    <property type="entry name" value="HBMQR"/>
</dbReference>
<dbReference type="SMR" id="P02026"/>
<dbReference type="FunCoup" id="P02026">
    <property type="interactions" value="33"/>
</dbReference>
<dbReference type="InParanoid" id="P02026"/>
<dbReference type="Proteomes" id="UP000006718">
    <property type="component" value="Unassembled WGS sequence"/>
</dbReference>
<dbReference type="GO" id="GO:0031838">
    <property type="term" value="C:haptoglobin-hemoglobin complex"/>
    <property type="evidence" value="ECO:0000318"/>
    <property type="project" value="GO_Central"/>
</dbReference>
<dbReference type="GO" id="GO:0005833">
    <property type="term" value="C:hemoglobin complex"/>
    <property type="evidence" value="ECO:0000318"/>
    <property type="project" value="GO_Central"/>
</dbReference>
<dbReference type="GO" id="GO:0020037">
    <property type="term" value="F:heme binding"/>
    <property type="evidence" value="ECO:0000318"/>
    <property type="project" value="GO_Central"/>
</dbReference>
<dbReference type="GO" id="GO:0031721">
    <property type="term" value="F:hemoglobin alpha binding"/>
    <property type="evidence" value="ECO:0000318"/>
    <property type="project" value="GO_Central"/>
</dbReference>
<dbReference type="GO" id="GO:0046872">
    <property type="term" value="F:metal ion binding"/>
    <property type="evidence" value="ECO:0007669"/>
    <property type="project" value="UniProtKB-KW"/>
</dbReference>
<dbReference type="GO" id="GO:0019825">
    <property type="term" value="F:oxygen binding"/>
    <property type="evidence" value="ECO:0000318"/>
    <property type="project" value="GO_Central"/>
</dbReference>
<dbReference type="GO" id="GO:0005344">
    <property type="term" value="F:oxygen carrier activity"/>
    <property type="evidence" value="ECO:0000318"/>
    <property type="project" value="GO_Central"/>
</dbReference>
<dbReference type="GO" id="GO:0098869">
    <property type="term" value="P:cellular oxidant detoxification"/>
    <property type="evidence" value="ECO:0007669"/>
    <property type="project" value="GOC"/>
</dbReference>
<dbReference type="GO" id="GO:0042744">
    <property type="term" value="P:hydrogen peroxide catabolic process"/>
    <property type="evidence" value="ECO:0000318"/>
    <property type="project" value="GO_Central"/>
</dbReference>
<dbReference type="CDD" id="cd08925">
    <property type="entry name" value="Hb-beta-like"/>
    <property type="match status" value="1"/>
</dbReference>
<dbReference type="FunFam" id="1.10.490.10:FF:000001">
    <property type="entry name" value="Hemoglobin subunit beta"/>
    <property type="match status" value="1"/>
</dbReference>
<dbReference type="Gene3D" id="1.10.490.10">
    <property type="entry name" value="Globins"/>
    <property type="match status" value="1"/>
</dbReference>
<dbReference type="InterPro" id="IPR000971">
    <property type="entry name" value="Globin"/>
</dbReference>
<dbReference type="InterPro" id="IPR009050">
    <property type="entry name" value="Globin-like_sf"/>
</dbReference>
<dbReference type="InterPro" id="IPR012292">
    <property type="entry name" value="Globin/Proto"/>
</dbReference>
<dbReference type="InterPro" id="IPR002337">
    <property type="entry name" value="Hemoglobin_b"/>
</dbReference>
<dbReference type="InterPro" id="IPR050056">
    <property type="entry name" value="Hemoglobin_oxygen_transport"/>
</dbReference>
<dbReference type="PANTHER" id="PTHR11442">
    <property type="entry name" value="HEMOGLOBIN FAMILY MEMBER"/>
    <property type="match status" value="1"/>
</dbReference>
<dbReference type="PANTHER" id="PTHR11442:SF42">
    <property type="entry name" value="HEMOGLOBIN SUBUNIT BETA"/>
    <property type="match status" value="1"/>
</dbReference>
<dbReference type="Pfam" id="PF00042">
    <property type="entry name" value="Globin"/>
    <property type="match status" value="1"/>
</dbReference>
<dbReference type="PRINTS" id="PR00814">
    <property type="entry name" value="BETAHAEM"/>
</dbReference>
<dbReference type="SUPFAM" id="SSF46458">
    <property type="entry name" value="Globin-like"/>
    <property type="match status" value="1"/>
</dbReference>
<dbReference type="PROSITE" id="PS01033">
    <property type="entry name" value="GLOBIN"/>
    <property type="match status" value="1"/>
</dbReference>
<keyword id="KW-0007">Acetylation</keyword>
<keyword id="KW-0903">Direct protein sequencing</keyword>
<keyword id="KW-0349">Heme</keyword>
<keyword id="KW-0408">Iron</keyword>
<keyword id="KW-0479">Metal-binding</keyword>
<keyword id="KW-0561">Oxygen transport</keyword>
<keyword id="KW-0597">Phosphoprotein</keyword>
<keyword id="KW-1185">Reference proteome</keyword>
<keyword id="KW-0702">S-nitrosylation</keyword>
<keyword id="KW-0813">Transport</keyword>
<sequence>VHLTPEEKNAVTTLWGKVNVDEVGGEALGRLLLVYPWTQRFFESFGDLSSPDAVMGNPKVKAHGKKVLGAFSDGLNHLDNLKGTFAQLSELHCDKLHVDPENFKLLGNVLVCVLAHHFGKEFTPQVQAAYQKVVAGVANALAHKYH</sequence>
<organism>
    <name type="scientific">Macaca mulatta</name>
    <name type="common">Rhesus macaque</name>
    <dbReference type="NCBI Taxonomy" id="9544"/>
    <lineage>
        <taxon>Eukaryota</taxon>
        <taxon>Metazoa</taxon>
        <taxon>Chordata</taxon>
        <taxon>Craniata</taxon>
        <taxon>Vertebrata</taxon>
        <taxon>Euteleostomi</taxon>
        <taxon>Mammalia</taxon>
        <taxon>Eutheria</taxon>
        <taxon>Euarchontoglires</taxon>
        <taxon>Primates</taxon>
        <taxon>Haplorrhini</taxon>
        <taxon>Catarrhini</taxon>
        <taxon>Cercopithecidae</taxon>
        <taxon>Cercopithecinae</taxon>
        <taxon>Macaca</taxon>
    </lineage>
</organism>
<evidence type="ECO:0000250" key="1">
    <source>
        <dbReference type="UniProtKB" id="P02086"/>
    </source>
</evidence>
<evidence type="ECO:0000250" key="2">
    <source>
        <dbReference type="UniProtKB" id="P68871"/>
    </source>
</evidence>
<evidence type="ECO:0000255" key="3">
    <source>
        <dbReference type="PROSITE-ProRule" id="PRU00238"/>
    </source>
</evidence>
<proteinExistence type="evidence at protein level"/>
<gene>
    <name type="primary">HBB</name>
</gene>
<comment type="function">
    <text>Involved in oxygen transport from the lung to the various peripheral tissues.</text>
</comment>
<comment type="subunit">
    <text>Heterotetramer of two alpha chains and two beta chains.</text>
</comment>
<comment type="tissue specificity">
    <text>Red blood cells.</text>
</comment>
<comment type="similarity">
    <text evidence="3">Belongs to the globin family.</text>
</comment>
<name>HBB_MACMU</name>
<reference key="1">
    <citation type="journal article" date="1970" name="Int. J. Protein Res.">
        <title>The primary structure of the alpha and beta polypeptide chains of adult hemoglobin of the Rhesus monkey (Macaca mulatta). Biochemical studies on hemoglobins and myoglobins. IV.</title>
        <authorList>
            <person name="Matsuda G."/>
            <person name="Maita T."/>
            <person name="Ota H."/>
            <person name="Takei H."/>
        </authorList>
    </citation>
    <scope>PROTEIN SEQUENCE</scope>
</reference>
<feature type="chain" id="PRO_0000053004" description="Hemoglobin subunit beta">
    <location>
        <begin position="1"/>
        <end position="146"/>
    </location>
</feature>
<feature type="domain" description="Globin" evidence="3">
    <location>
        <begin position="2"/>
        <end position="146"/>
    </location>
</feature>
<feature type="binding site" description="distal binding residue">
    <location>
        <position position="63"/>
    </location>
    <ligand>
        <name>heme b</name>
        <dbReference type="ChEBI" id="CHEBI:60344"/>
    </ligand>
    <ligandPart>
        <name>Fe</name>
        <dbReference type="ChEBI" id="CHEBI:18248"/>
    </ligandPart>
</feature>
<feature type="binding site" description="proximal binding residue">
    <location>
        <position position="92"/>
    </location>
    <ligand>
        <name>heme b</name>
        <dbReference type="ChEBI" id="CHEBI:60344"/>
    </ligand>
    <ligandPart>
        <name>Fe</name>
        <dbReference type="ChEBI" id="CHEBI:18248"/>
    </ligandPart>
</feature>
<feature type="modified residue" description="N-acetylvaline" evidence="1">
    <location>
        <position position="1"/>
    </location>
</feature>
<feature type="modified residue" description="Phosphothreonine" evidence="2">
    <location>
        <position position="12"/>
    </location>
</feature>
<feature type="modified residue" description="Phosphoserine" evidence="2">
    <location>
        <position position="44"/>
    </location>
</feature>
<feature type="modified residue" description="N6-acetyllysine" evidence="2">
    <location>
        <position position="59"/>
    </location>
</feature>
<feature type="modified residue" description="N6-acetyllysine" evidence="2">
    <location>
        <position position="82"/>
    </location>
</feature>
<feature type="modified residue" description="S-nitrosocysteine" evidence="2">
    <location>
        <position position="93"/>
    </location>
</feature>
<feature type="modified residue" description="N6-acetyllysine" evidence="2">
    <location>
        <position position="144"/>
    </location>
</feature>